<feature type="chain" id="PRO_0000244349" description="Arrestin domain-containing protein 3">
    <location>
        <begin position="1"/>
        <end position="414"/>
    </location>
</feature>
<feature type="region of interest" description="Disordered" evidence="1">
    <location>
        <begin position="393"/>
        <end position="414"/>
    </location>
</feature>
<feature type="short sequence motif" description="PPxY motif 1" evidence="11">
    <location>
        <begin position="346"/>
        <end position="349"/>
    </location>
</feature>
<feature type="short sequence motif" description="PPxY motif 2" evidence="11">
    <location>
        <begin position="391"/>
        <end position="394"/>
    </location>
</feature>
<feature type="compositionally biased region" description="Basic and acidic residues" evidence="1">
    <location>
        <begin position="405"/>
        <end position="414"/>
    </location>
</feature>
<feature type="mutagenesis site" description="Abolishes interaction with ADRB2; when associated with E-52; E-85 and E-139." evidence="9">
    <original>K</original>
    <variation>E</variation>
    <location>
        <position position="48"/>
    </location>
</feature>
<feature type="mutagenesis site" description="Abolishes interaction with ADRB2; when associated with E-48; E-85 and E-139." evidence="9">
    <original>R</original>
    <variation>E</variation>
    <location>
        <position position="52"/>
    </location>
</feature>
<feature type="mutagenesis site" description="Nearly abolishes interaction with ADRB2; when associated with E-58; E-135 and E-153." evidence="9">
    <original>K</original>
    <variation>E</variation>
    <location>
        <position position="56"/>
    </location>
</feature>
<feature type="mutagenesis site" description="Nearly abolishes interaction with ADRB2; when associated with E-56; E-135 and E-153." evidence="9">
    <original>R</original>
    <variation>E</variation>
    <location>
        <position position="58"/>
    </location>
</feature>
<feature type="mutagenesis site" description="Abolishes interaction with ADRB2; when associated with E-48; E-52 and E-139." evidence="9">
    <original>K</original>
    <variation>E</variation>
    <location>
        <position position="85"/>
    </location>
</feature>
<feature type="mutagenesis site" description="Nearly abolishes interaction with ADRB2; when associated with E-56; E-58 and E-153." evidence="9">
    <original>R</original>
    <variation>E</variation>
    <location>
        <position position="135"/>
    </location>
</feature>
<feature type="mutagenesis site" description="Abolishes interaction with ADRB2; when associated with E-48; E-52 and E-85." evidence="9">
    <original>K</original>
    <variation>E</variation>
    <location>
        <position position="139"/>
    </location>
</feature>
<feature type="mutagenesis site" description="Nearly abolishes interaction with ADRB2; when associated with E-56; E-58 and E-135." evidence="9">
    <original>K</original>
    <variation>E</variation>
    <location>
        <position position="153"/>
    </location>
</feature>
<feature type="mutagenesis site" description="Strongly reduces interaction with NEDD4. Abolishes interaction with NEDD4; when associated with 391-A--A-394. Abolishes interaction with HGS; when associated with 391-A--A-394." evidence="3 6">
    <original>PPSY</original>
    <variation>AASA</variation>
    <location>
        <begin position="346"/>
        <end position="349"/>
    </location>
</feature>
<feature type="mutagenesis site" description="Abolishes interaction with NEDD4; when associated with 346-A--A-349." evidence="3">
    <original>PPLY</original>
    <variation>AALA</variation>
    <location>
        <begin position="391"/>
        <end position="394"/>
    </location>
</feature>
<feature type="sequence conflict" description="In Ref. 2; BAF84442." evidence="11" ref="2">
    <original>S</original>
    <variation>G</variation>
    <location>
        <position position="12"/>
    </location>
</feature>
<feature type="strand" evidence="16">
    <location>
        <begin position="5"/>
        <end position="13"/>
    </location>
</feature>
<feature type="strand" evidence="16">
    <location>
        <begin position="29"/>
        <end position="40"/>
    </location>
</feature>
<feature type="strand" evidence="16">
    <location>
        <begin position="42"/>
        <end position="61"/>
    </location>
</feature>
<feature type="strand" evidence="16">
    <location>
        <begin position="73"/>
        <end position="90"/>
    </location>
</feature>
<feature type="strand" evidence="16">
    <location>
        <begin position="103"/>
        <end position="105"/>
    </location>
</feature>
<feature type="strand" evidence="16">
    <location>
        <begin position="107"/>
        <end position="117"/>
    </location>
</feature>
<feature type="strand" evidence="16">
    <location>
        <begin position="130"/>
        <end position="143"/>
    </location>
</feature>
<feature type="strand" evidence="16">
    <location>
        <begin position="150"/>
        <end position="155"/>
    </location>
</feature>
<feature type="helix" evidence="15">
    <location>
        <begin position="349"/>
        <end position="351"/>
    </location>
</feature>
<reference key="1">
    <citation type="journal article" date="2000" name="DNA Res.">
        <title>Prediction of the coding sequences of unidentified human genes. XVI. The complete sequences of 150 new cDNA clones from brain which code for large proteins in vitro.</title>
        <authorList>
            <person name="Nagase T."/>
            <person name="Kikuno R."/>
            <person name="Ishikawa K."/>
            <person name="Hirosawa M."/>
            <person name="Ohara O."/>
        </authorList>
    </citation>
    <scope>NUCLEOTIDE SEQUENCE [LARGE SCALE MRNA]</scope>
    <source>
        <tissue>Brain</tissue>
    </source>
</reference>
<reference key="2">
    <citation type="journal article" date="2004" name="Nat. Genet.">
        <title>Complete sequencing and characterization of 21,243 full-length human cDNAs.</title>
        <authorList>
            <person name="Ota T."/>
            <person name="Suzuki Y."/>
            <person name="Nishikawa T."/>
            <person name="Otsuki T."/>
            <person name="Sugiyama T."/>
            <person name="Irie R."/>
            <person name="Wakamatsu A."/>
            <person name="Hayashi K."/>
            <person name="Sato H."/>
            <person name="Nagai K."/>
            <person name="Kimura K."/>
            <person name="Makita H."/>
            <person name="Sekine M."/>
            <person name="Obayashi M."/>
            <person name="Nishi T."/>
            <person name="Shibahara T."/>
            <person name="Tanaka T."/>
            <person name="Ishii S."/>
            <person name="Yamamoto J."/>
            <person name="Saito K."/>
            <person name="Kawai Y."/>
            <person name="Isono Y."/>
            <person name="Nakamura Y."/>
            <person name="Nagahari K."/>
            <person name="Murakami K."/>
            <person name="Yasuda T."/>
            <person name="Iwayanagi T."/>
            <person name="Wagatsuma M."/>
            <person name="Shiratori A."/>
            <person name="Sudo H."/>
            <person name="Hosoiri T."/>
            <person name="Kaku Y."/>
            <person name="Kodaira H."/>
            <person name="Kondo H."/>
            <person name="Sugawara M."/>
            <person name="Takahashi M."/>
            <person name="Kanda K."/>
            <person name="Yokoi T."/>
            <person name="Furuya T."/>
            <person name="Kikkawa E."/>
            <person name="Omura Y."/>
            <person name="Abe K."/>
            <person name="Kamihara K."/>
            <person name="Katsuta N."/>
            <person name="Sato K."/>
            <person name="Tanikawa M."/>
            <person name="Yamazaki M."/>
            <person name="Ninomiya K."/>
            <person name="Ishibashi T."/>
            <person name="Yamashita H."/>
            <person name="Murakawa K."/>
            <person name="Fujimori K."/>
            <person name="Tanai H."/>
            <person name="Kimata M."/>
            <person name="Watanabe M."/>
            <person name="Hiraoka S."/>
            <person name="Chiba Y."/>
            <person name="Ishida S."/>
            <person name="Ono Y."/>
            <person name="Takiguchi S."/>
            <person name="Watanabe S."/>
            <person name="Yosida M."/>
            <person name="Hotuta T."/>
            <person name="Kusano J."/>
            <person name="Kanehori K."/>
            <person name="Takahashi-Fujii A."/>
            <person name="Hara H."/>
            <person name="Tanase T.-O."/>
            <person name="Nomura Y."/>
            <person name="Togiya S."/>
            <person name="Komai F."/>
            <person name="Hara R."/>
            <person name="Takeuchi K."/>
            <person name="Arita M."/>
            <person name="Imose N."/>
            <person name="Musashino K."/>
            <person name="Yuuki H."/>
            <person name="Oshima A."/>
            <person name="Sasaki N."/>
            <person name="Aotsuka S."/>
            <person name="Yoshikawa Y."/>
            <person name="Matsunawa H."/>
            <person name="Ichihara T."/>
            <person name="Shiohata N."/>
            <person name="Sano S."/>
            <person name="Moriya S."/>
            <person name="Momiyama H."/>
            <person name="Satoh N."/>
            <person name="Takami S."/>
            <person name="Terashima Y."/>
            <person name="Suzuki O."/>
            <person name="Nakagawa S."/>
            <person name="Senoh A."/>
            <person name="Mizoguchi H."/>
            <person name="Goto Y."/>
            <person name="Shimizu F."/>
            <person name="Wakebe H."/>
            <person name="Hishigaki H."/>
            <person name="Watanabe T."/>
            <person name="Sugiyama A."/>
            <person name="Takemoto M."/>
            <person name="Kawakami B."/>
            <person name="Yamazaki M."/>
            <person name="Watanabe K."/>
            <person name="Kumagai A."/>
            <person name="Itakura S."/>
            <person name="Fukuzumi Y."/>
            <person name="Fujimori Y."/>
            <person name="Komiyama M."/>
            <person name="Tashiro H."/>
            <person name="Tanigami A."/>
            <person name="Fujiwara T."/>
            <person name="Ono T."/>
            <person name="Yamada K."/>
            <person name="Fujii Y."/>
            <person name="Ozaki K."/>
            <person name="Hirao M."/>
            <person name="Ohmori Y."/>
            <person name="Kawabata A."/>
            <person name="Hikiji T."/>
            <person name="Kobatake N."/>
            <person name="Inagaki H."/>
            <person name="Ikema Y."/>
            <person name="Okamoto S."/>
            <person name="Okitani R."/>
            <person name="Kawakami T."/>
            <person name="Noguchi S."/>
            <person name="Itoh T."/>
            <person name="Shigeta K."/>
            <person name="Senba T."/>
            <person name="Matsumura K."/>
            <person name="Nakajima Y."/>
            <person name="Mizuno T."/>
            <person name="Morinaga M."/>
            <person name="Sasaki M."/>
            <person name="Togashi T."/>
            <person name="Oyama M."/>
            <person name="Hata H."/>
            <person name="Watanabe M."/>
            <person name="Komatsu T."/>
            <person name="Mizushima-Sugano J."/>
            <person name="Satoh T."/>
            <person name="Shirai Y."/>
            <person name="Takahashi Y."/>
            <person name="Nakagawa K."/>
            <person name="Okumura K."/>
            <person name="Nagase T."/>
            <person name="Nomura N."/>
            <person name="Kikuchi H."/>
            <person name="Masuho Y."/>
            <person name="Yamashita R."/>
            <person name="Nakai K."/>
            <person name="Yada T."/>
            <person name="Nakamura Y."/>
            <person name="Ohara O."/>
            <person name="Isogai T."/>
            <person name="Sugano S."/>
        </authorList>
    </citation>
    <scope>NUCLEOTIDE SEQUENCE [LARGE SCALE MRNA]</scope>
    <source>
        <tissue>Placenta</tissue>
    </source>
</reference>
<reference key="3">
    <citation type="journal article" date="2004" name="Genome Res.">
        <title>The status, quality, and expansion of the NIH full-length cDNA project: the Mammalian Gene Collection (MGC).</title>
        <authorList>
            <consortium name="The MGC Project Team"/>
        </authorList>
    </citation>
    <scope>NUCLEOTIDE SEQUENCE [LARGE SCALE MRNA]</scope>
    <source>
        <tissue>Uterus</tissue>
    </source>
</reference>
<reference key="4">
    <citation type="journal article" date="2006" name="Endocrinology">
        <title>Thioredoxin-binding protein-2-like inducible membrane protein is a novel vitamin D3 and peroxisome proliferator-activated receptor (PPAR)gamma ligand target protein that regulates PPARgamma signaling.</title>
        <authorList>
            <person name="Oka S."/>
            <person name="Masutani H."/>
            <person name="Liu W."/>
            <person name="Horita H."/>
            <person name="Wang D."/>
            <person name="Kizaka-Kondoh S."/>
            <person name="Yodoi J."/>
        </authorList>
    </citation>
    <scope>SUBCELLULAR LOCATION</scope>
    <scope>LACK OF INTERACTION WITH TXN</scope>
    <scope>TISSUE SPECIFICITY</scope>
    <scope>INDUCTION</scope>
</reference>
<reference key="5">
    <citation type="journal article" date="2010" name="EMBO Rep.">
        <title>Arrestin domain-containing protein 3 recruits the NEDD4 E3 ligase to mediate ubiquitination of the beta2-adrenergic receptor.</title>
        <authorList>
            <person name="Nabhan J.F."/>
            <person name="Pan H."/>
            <person name="Lu Q."/>
        </authorList>
    </citation>
    <scope>FUNCTION</scope>
    <scope>SUBCELLULAR LOCATION</scope>
    <scope>INTERACTION WITH NEDD4 AND ADRB2</scope>
    <scope>MUTAGENESIS OF 346-PRO--TYR-349 AND 391-PRO--TYR-394</scope>
</reference>
<reference key="6">
    <citation type="journal article" date="2011" name="Cell Metab.">
        <title>The arrestin domain-containing 3 protein regulates body mass and energy expenditure.</title>
        <authorList>
            <person name="Patwari P."/>
            <person name="Emilsson V."/>
            <person name="Schadt E.E."/>
            <person name="Chutkow W.A."/>
            <person name="Lee S."/>
            <person name="Marsili A."/>
            <person name="Zhang Y."/>
            <person name="Dobrin R."/>
            <person name="Cohen D.E."/>
            <person name="Larsen P.R."/>
            <person name="Zavacki A.M."/>
            <person name="Fong L.G."/>
            <person name="Young S.G."/>
            <person name="Lee R.T."/>
        </authorList>
    </citation>
    <scope>FUNCTION</scope>
    <scope>INTERACTION WITH ADRB2 AND ADRB3</scope>
    <scope>TISSUE SPECIFICITY</scope>
    <scope>INDUCTION BY FASTING</scope>
</reference>
<reference key="7">
    <citation type="journal article" date="2011" name="J. Virol.">
        <title>Multiple interactions between the ESCRT machinery and arrestin-related proteins: implications for PPXY-dependent budding.</title>
        <authorList>
            <person name="Rauch S."/>
            <person name="Martin-Serrano J."/>
        </authorList>
    </citation>
    <scope>INTERACTION WITH WWP1</scope>
</reference>
<reference key="8">
    <citation type="journal article" date="2013" name="EMBO Rep.">
        <title>Distinct roles for beta-arrestin2 and arrestin-domain-containing proteins in beta2 adrenergic receptor trafficking.</title>
        <authorList>
            <person name="Han S.O."/>
            <person name="Kommaddi R.P."/>
            <person name="Shenoy S.K."/>
        </authorList>
    </citation>
    <scope>FUNCTION</scope>
    <scope>INTERACTION WITH HGS AND NEDD4</scope>
    <scope>SUBCELLULAR LOCATION</scope>
    <scope>MUTAGENESIS OF 346-PRO--TYR-349 AND 391-PRO--TYR-394</scope>
</reference>
<reference key="9">
    <citation type="journal article" date="2013" name="J. Cell Sci.">
        <title>Alpha-arrestin 1 (ARRDC1) and beta-arrestins cooperate to mediate Notch degradation in mammals.</title>
        <authorList>
            <person name="Puca L."/>
            <person name="Chastagner P."/>
            <person name="Meas-Yedid V."/>
            <person name="Israel A."/>
            <person name="Brou C."/>
        </authorList>
    </citation>
    <scope>INTERACTION WITH ITCH</scope>
</reference>
<reference evidence="12" key="10">
    <citation type="journal article" date="2014" name="J. Biol. Chem.">
        <title>Structural and biochemical basis for ubiquitin ligase recruitment by arrestin-related domain-containing protein-3 (ARRDC3).</title>
        <authorList>
            <person name="Qi S."/>
            <person name="O'Hayre M."/>
            <person name="Gutkind J.S."/>
            <person name="Hurley J.H."/>
        </authorList>
    </citation>
    <scope>X-RAY CRYSTALLOGRAPHY (1.70 ANGSTROMS) OF 342-354 IN COMPLEX WITH NEDD4</scope>
    <scope>INTERACTION WITH NEDD4</scope>
</reference>
<reference evidence="13 14" key="11">
    <citation type="journal article" date="2014" name="Protein Sci.">
        <title>Insights into beta2-adrenergic receptor binding from structures of the N-terminal lobe of ARRDC3.</title>
        <authorList>
            <person name="Qi S."/>
            <person name="O'Hayre M."/>
            <person name="Gutkind J.S."/>
            <person name="Hurley J.H."/>
        </authorList>
    </citation>
    <scope>X-RAY CRYSTALLOGRAPHY (1.73 ANGSTROMS) OF 1-180</scope>
    <scope>INTERACTION WITH ADRB2</scope>
    <scope>MUTAGENESIS OF LYS-48; ARG-52; LYS-56; ARG-58; LYS-85; ARG-135; LYS-139 AND LYS-153</scope>
</reference>
<protein>
    <recommendedName>
        <fullName>Arrestin domain-containing protein 3</fullName>
    </recommendedName>
    <alternativeName>
        <fullName evidence="10">TBP-2-like inducible membrane protein</fullName>
        <shortName evidence="10">TLIMP</shortName>
    </alternativeName>
</protein>
<name>ARRD3_HUMAN</name>
<sequence>MVLGKVKSLTISFDCLNDSNVPVYSSGDTVSGRVNLEVTGEIRVKSLKIHARGHAKVRWTESRNAGSNTAYTQNYTEEVEYFNHKDILIGHERDDDNSEEGFHTIHSGRHEYAFSFELPQTPLATSFEGRHGSVRYWVKAELHRPWLLPVKLKKEFTVFEHIDINTPSLLSPQAGTKEKTLCCWFCTSGPISLSAKIERKGYTPGESIQIFAEIENCSSRMVVPKAAIYQTQAFYAKGKMKEVKQLVANLRGESLSSGKTETWNGKLLKIPPVSPSILDCSIIRVEYSLMVYVDIPGAMDLFLNLPLVIGTIPLHPFGSRTSSVSSQCSMNMNWLSLSLPERPEAPPSYAEVVTEEQRRNNLAPVSACDDFERALQGPLFAYIQEFRFLPPPLYSEIDPNPDQSADDRPSCPSR</sequence>
<keyword id="KW-0002">3D-structure</keyword>
<keyword id="KW-1003">Cell membrane</keyword>
<keyword id="KW-0963">Cytoplasm</keyword>
<keyword id="KW-0967">Endosome</keyword>
<keyword id="KW-0458">Lysosome</keyword>
<keyword id="KW-0472">Membrane</keyword>
<keyword id="KW-1267">Proteomics identification</keyword>
<keyword id="KW-1185">Reference proteome</keyword>
<keyword id="KW-0677">Repeat</keyword>
<proteinExistence type="evidence at protein level"/>
<accession>Q96B67</accession>
<accession>A8K6T8</accession>
<accession>Q9P2H1</accession>
<gene>
    <name type="primary">ARRDC3</name>
    <name type="synonym">KIAA1376</name>
</gene>
<comment type="function">
    <text evidence="3 6">Adapter protein that plays a role in regulating cell-surface expression of adrenergic receptors and probably also other G protein-coupled receptors (PubMed:20559325, PubMed:21982743, PubMed:23208550). Plays a role in NEDD4-mediated ubiquitination and endocytosis af activated ADRB2 and subsequent ADRB2 degradation (PubMed:20559325, PubMed:23208550). May recruit NEDD4 to ADRB2 (PubMed:20559325). Alternatively, may function as adapter protein that does not play a major role in recruiting NEDD4 to ADRB2, but rather plays a role in a targeting ADRB2 to endosomes (PubMed:23208550).</text>
</comment>
<comment type="subunit">
    <text evidence="2 3 4 5 6 7 8 9">Interacts (via PPxY motifs) with NEDD4 (via WW domains) (PubMed:20559325, PubMed:23208550, PubMed:24379409). Interacts with ADRB2 (PubMed:20559325, PubMed:21982743, PubMed:25220262). Interacts with ADRB3 (PubMed:21982743). Interacts with HGS (via PPxY motifs) (PubMed:23208550). Does not bind TXN (thioredoxin) (PubMed:16269462). Interacts with ITCH (PubMed:23886940). Interacts with WWP1 (via WW domains) (PubMed:21191027).</text>
</comment>
<comment type="interaction">
    <interactant intactId="EBI-2875665">
        <id>Q96B67</id>
    </interactant>
    <interactant intactId="EBI-491169">
        <id>P07550</id>
        <label>ADRB2</label>
    </interactant>
    <organismsDiffer>false</organismsDiffer>
    <experiments>6</experiments>
</comment>
<comment type="interaction">
    <interactant intactId="EBI-2875665">
        <id>Q96B67</id>
    </interactant>
    <interactant intactId="EBI-747185">
        <id>O95817</id>
        <label>BAG3</label>
    </interactant>
    <organismsDiffer>false</organismsDiffer>
    <experiments>10</experiments>
</comment>
<comment type="interaction">
    <interactant intactId="EBI-2875665">
        <id>Q96B67</id>
    </interactant>
    <interactant intactId="EBI-765407">
        <id>P41182</id>
        <label>BCL6</label>
    </interactant>
    <organismsDiffer>false</organismsDiffer>
    <experiments>3</experiments>
</comment>
<comment type="interaction">
    <interactant intactId="EBI-2875665">
        <id>Q96B67</id>
    </interactant>
    <interactant intactId="EBI-723996">
        <id>Q8IVM0</id>
        <label>CCDC50</label>
    </interactant>
    <organismsDiffer>false</organismsDiffer>
    <experiments>3</experiments>
</comment>
<comment type="interaction">
    <interactant intactId="EBI-2875665">
        <id>Q96B67</id>
    </interactant>
    <interactant intactId="EBI-9250559">
        <id>P32320</id>
        <label>CDA</label>
    </interactant>
    <organismsDiffer>false</organismsDiffer>
    <experiments>5</experiments>
</comment>
<comment type="interaction">
    <interactant intactId="EBI-2875665">
        <id>Q96B67</id>
    </interactant>
    <interactant intactId="EBI-740086">
        <id>Q96GG9</id>
        <label>DCUN1D1</label>
    </interactant>
    <organismsDiffer>false</organismsDiffer>
    <experiments>10</experiments>
</comment>
<comment type="interaction">
    <interactant intactId="EBI-2875665">
        <id>Q96B67</id>
    </interactant>
    <interactant intactId="EBI-743414">
        <id>O95967</id>
        <label>EFEMP2</label>
    </interactant>
    <organismsDiffer>false</organismsDiffer>
    <experiments>3</experiments>
</comment>
<comment type="interaction">
    <interactant intactId="EBI-2875665">
        <id>Q96B67</id>
    </interactant>
    <interactant intactId="EBI-12135243">
        <id>O95208-2</id>
        <label>EPN2</label>
    </interactant>
    <organismsDiffer>false</organismsDiffer>
    <experiments>3</experiments>
</comment>
<comment type="interaction">
    <interactant intactId="EBI-2875665">
        <id>Q96B67</id>
    </interactant>
    <interactant intactId="EBI-6658203">
        <id>Q86YD7</id>
        <label>FAM90A1</label>
    </interactant>
    <organismsDiffer>false</organismsDiffer>
    <experiments>3</experiments>
</comment>
<comment type="interaction">
    <interactant intactId="EBI-2875665">
        <id>Q96B67</id>
    </interactant>
    <interactant intactId="EBI-10187349">
        <id>O60760</id>
        <label>HPGDS</label>
    </interactant>
    <organismsDiffer>false</organismsDiffer>
    <experiments>9</experiments>
</comment>
<comment type="interaction">
    <interactant intactId="EBI-2875665">
        <id>Q96B67</id>
    </interactant>
    <interactant intactId="EBI-1564678">
        <id>Q96J02</id>
        <label>ITCH</label>
    </interactant>
    <organismsDiffer>false</organismsDiffer>
    <experiments>5</experiments>
</comment>
<comment type="interaction">
    <interactant intactId="EBI-2875665">
        <id>Q96B67</id>
    </interactant>
    <interactant intactId="EBI-948678">
        <id>P16144</id>
        <label>ITGB4</label>
    </interactant>
    <organismsDiffer>false</organismsDiffer>
    <experiments>3</experiments>
</comment>
<comment type="interaction">
    <interactant intactId="EBI-2875665">
        <id>Q96B67</id>
    </interactant>
    <interactant intactId="EBI-399246">
        <id>Q9UBU8</id>
        <label>MORF4L1</label>
    </interactant>
    <organismsDiffer>false</organismsDiffer>
    <experiments>3</experiments>
</comment>
<comment type="interaction">
    <interactant intactId="EBI-2875665">
        <id>Q96B67</id>
    </interactant>
    <interactant intactId="EBI-10288852">
        <id>Q9UBU8-2</id>
        <label>MORF4L1</label>
    </interactant>
    <organismsDiffer>false</organismsDiffer>
    <experiments>3</experiments>
</comment>
<comment type="interaction">
    <interactant intactId="EBI-2875665">
        <id>Q96B67</id>
    </interactant>
    <interactant intactId="EBI-726944">
        <id>P46934</id>
        <label>NEDD4</label>
    </interactant>
    <organismsDiffer>false</organismsDiffer>
    <experiments>4</experiments>
</comment>
<comment type="interaction">
    <interactant intactId="EBI-2875665">
        <id>Q96B67</id>
    </interactant>
    <interactant intactId="EBI-717962">
        <id>Q96PU5</id>
        <label>NEDD4L</label>
    </interactant>
    <organismsDiffer>false</organismsDiffer>
    <experiments>4</experiments>
</comment>
<comment type="interaction">
    <interactant intactId="EBI-2875665">
        <id>Q96B67</id>
    </interactant>
    <interactant intactId="EBI-6955201">
        <id>Q96PU5-2</id>
        <label>NEDD4L</label>
    </interactant>
    <organismsDiffer>false</organismsDiffer>
    <experiments>5</experiments>
</comment>
<comment type="interaction">
    <interactant intactId="EBI-2875665">
        <id>Q96B67</id>
    </interactant>
    <interactant intactId="EBI-748974">
        <id>Q96CV9</id>
        <label>OPTN</label>
    </interactant>
    <organismsDiffer>false</organismsDiffer>
    <experiments>3</experiments>
</comment>
<comment type="interaction">
    <interactant intactId="EBI-2875665">
        <id>Q96B67</id>
    </interactant>
    <interactant intactId="EBI-746259">
        <id>Q96DC9</id>
        <label>OTUB2</label>
    </interactant>
    <organismsDiffer>false</organismsDiffer>
    <experiments>8</experiments>
</comment>
<comment type="interaction">
    <interactant intactId="EBI-2875665">
        <id>Q96B67</id>
    </interactant>
    <interactant intactId="EBI-530034">
        <id>O43189</id>
        <label>PHF1</label>
    </interactant>
    <organismsDiffer>false</organismsDiffer>
    <experiments>5</experiments>
</comment>
<comment type="interaction">
    <interactant intactId="EBI-2875665">
        <id>Q96B67</id>
    </interactant>
    <interactant intactId="EBI-1383852">
        <id>P54646</id>
        <label>PRKAA2</label>
    </interactant>
    <organismsDiffer>false</organismsDiffer>
    <experiments>3</experiments>
</comment>
<comment type="interaction">
    <interactant intactId="EBI-2875665">
        <id>Q96B67</id>
    </interactant>
    <interactant intactId="EBI-14093916">
        <id>Q9UJ41-4</id>
        <label>RABGEF1</label>
    </interactant>
    <organismsDiffer>false</organismsDiffer>
    <experiments>3</experiments>
</comment>
<comment type="interaction">
    <interactant intactId="EBI-2875665">
        <id>Q96B67</id>
    </interactant>
    <interactant intactId="EBI-296739">
        <id>P63244</id>
        <label>RACK1</label>
    </interactant>
    <organismsDiffer>false</organismsDiffer>
    <experiments>3</experiments>
</comment>
<comment type="interaction">
    <interactant intactId="EBI-2875665">
        <id>Q96B67</id>
    </interactant>
    <interactant intactId="EBI-2339393">
        <id>Q9NS91</id>
        <label>RAD18</label>
    </interactant>
    <organismsDiffer>false</organismsDiffer>
    <experiments>3</experiments>
</comment>
<comment type="interaction">
    <interactant intactId="EBI-2875665">
        <id>Q96B67</id>
    </interactant>
    <interactant intactId="EBI-358489">
        <id>Q96GM5</id>
        <label>SMARCD1</label>
    </interactant>
    <organismsDiffer>false</organismsDiffer>
    <experiments>3</experiments>
</comment>
<comment type="interaction">
    <interactant intactId="EBI-2875665">
        <id>Q96B67</id>
    </interactant>
    <interactant intactId="EBI-373258">
        <id>O75886</id>
        <label>STAM2</label>
    </interactant>
    <organismsDiffer>false</organismsDiffer>
    <experiments>6</experiments>
</comment>
<comment type="interaction">
    <interactant intactId="EBI-2875665">
        <id>Q96B67</id>
    </interactant>
    <interactant intactId="EBI-527670">
        <id>P21580</id>
        <label>TNFAIP3</label>
    </interactant>
    <organismsDiffer>false</organismsDiffer>
    <experiments>6</experiments>
</comment>
<comment type="interaction">
    <interactant intactId="EBI-2875665">
        <id>Q96B67</id>
    </interactant>
    <interactant intactId="EBI-74615">
        <id>Q9H0E2</id>
        <label>TOLLIP</label>
    </interactant>
    <organismsDiffer>false</organismsDiffer>
    <experiments>3</experiments>
</comment>
<comment type="interaction">
    <interactant intactId="EBI-2875665">
        <id>Q96B67</id>
    </interactant>
    <interactant intactId="EBI-5235829">
        <id>Q8IWZ5</id>
        <label>TRIM42</label>
    </interactant>
    <organismsDiffer>false</organismsDiffer>
    <experiments>3</experiments>
</comment>
<comment type="interaction">
    <interactant intactId="EBI-2875665">
        <id>Q96B67</id>
    </interactant>
    <interactant intactId="EBI-357304">
        <id>P62987</id>
        <label>UBA52</label>
    </interactant>
    <organismsDiffer>false</organismsDiffer>
    <experiments>3</experiments>
</comment>
<comment type="interaction">
    <interactant intactId="EBI-2875665">
        <id>Q96B67</id>
    </interactant>
    <interactant intactId="EBI-749370">
        <id>Q9BSL1</id>
        <label>UBAC1</label>
    </interactant>
    <organismsDiffer>false</organismsDiffer>
    <experiments>3</experiments>
</comment>
<comment type="interaction">
    <interactant intactId="EBI-2875665">
        <id>Q96B67</id>
    </interactant>
    <interactant intactId="EBI-7353612">
        <id>P57075-2</id>
        <label>UBASH3A</label>
    </interactant>
    <organismsDiffer>false</organismsDiffer>
    <experiments>3</experiments>
</comment>
<comment type="interaction">
    <interactant intactId="EBI-2875665">
        <id>Q96B67</id>
    </interactant>
    <interactant intactId="EBI-743540">
        <id>P51668</id>
        <label>UBE2D1</label>
    </interactant>
    <organismsDiffer>false</organismsDiffer>
    <experiments>5</experiments>
</comment>
<comment type="interaction">
    <interactant intactId="EBI-2875665">
        <id>Q96B67</id>
    </interactant>
    <interactant intactId="EBI-347677">
        <id>P62837</id>
        <label>UBE2D2</label>
    </interactant>
    <organismsDiffer>false</organismsDiffer>
    <experiments>5</experiments>
</comment>
<comment type="interaction">
    <interactant intactId="EBI-2875665">
        <id>Q96B67</id>
    </interactant>
    <interactant intactId="EBI-2129763">
        <id>Q96LR5</id>
        <label>UBE2E2</label>
    </interactant>
    <organismsDiffer>false</organismsDiffer>
    <experiments>8</experiments>
</comment>
<comment type="interaction">
    <interactant intactId="EBI-2875665">
        <id>Q96B67</id>
    </interactant>
    <interactant intactId="EBI-348496">
        <id>Q969T4</id>
        <label>UBE2E3</label>
    </interactant>
    <organismsDiffer>false</organismsDiffer>
    <experiments>7</experiments>
</comment>
<comment type="interaction">
    <interactant intactId="EBI-2875665">
        <id>Q96B67</id>
    </interactant>
    <interactant intactId="EBI-947187">
        <id>Q9UHD9</id>
        <label>UBQLN2</label>
    </interactant>
    <organismsDiffer>false</organismsDiffer>
    <experiments>3</experiments>
</comment>
<comment type="interaction">
    <interactant intactId="EBI-2875665">
        <id>Q96B67</id>
    </interactant>
    <interactant intactId="EBI-12040603">
        <id>Q9NZC7-5</id>
        <label>WWOX</label>
    </interactant>
    <organismsDiffer>false</organismsDiffer>
    <experiments>8</experiments>
</comment>
<comment type="interaction">
    <interactant intactId="EBI-2875665">
        <id>Q96B67</id>
    </interactant>
    <interactant intactId="EBI-742157">
        <id>Q9H0M0</id>
        <label>WWP1</label>
    </interactant>
    <organismsDiffer>false</organismsDiffer>
    <experiments>5</experiments>
</comment>
<comment type="interaction">
    <interactant intactId="EBI-2875665">
        <id>Q96B67</id>
    </interactant>
    <interactant intactId="EBI-743923">
        <id>O00308</id>
        <label>WWP2</label>
    </interactant>
    <organismsDiffer>false</organismsDiffer>
    <experiments>5</experiments>
</comment>
<comment type="interaction">
    <interactant intactId="EBI-2875665">
        <id>Q96B67</id>
    </interactant>
    <interactant intactId="EBI-527853">
        <id>Q9UGI0</id>
        <label>ZRANB1</label>
    </interactant>
    <organismsDiffer>false</organismsDiffer>
    <experiments>3</experiments>
</comment>
<comment type="subcellular location">
    <subcellularLocation>
        <location evidence="2 6">Cytoplasm</location>
    </subcellularLocation>
    <subcellularLocation>
        <location evidence="2 3 6">Cell membrane</location>
        <topology evidence="2 3">Peripheral membrane protein</topology>
        <orientation evidence="2 3">Cytoplasmic side</orientation>
    </subcellularLocation>
    <subcellularLocation>
        <location evidence="2 6">Lysosome</location>
    </subcellularLocation>
    <subcellularLocation>
        <location evidence="2 6">Endosome</location>
    </subcellularLocation>
    <subcellularLocation>
        <location evidence="3 6">Early endosome</location>
    </subcellularLocation>
    <text evidence="2 3 6">Associated with plasma membrane, as well as with endosomes and lysosomes during endocytosis (PubMed:16269462, PubMed:20559325, PubMed:23208550).</text>
</comment>
<comment type="tissue specificity">
    <text evidence="2">Highly expressed in skeletal muscle, placenta, kidney, lung, liver, blood, adrenal gland, lymph node, mammary gland, thyroid, and trachea (PubMed:16269462, PubMed:21982743). Very low levels in colon, thymus, spleen, small intestine, bladder and bone marrow (PubMed:16269462). Strong expression in differentiated adipocytes compared to preadipocytes (PubMed:16269462). Detected in omental fat and subcutaneous fat tissue (PubMed:21982743).</text>
</comment>
<comment type="induction">
    <text evidence="2 5">By troglitazone and pioglitazone (selective PPARG agonists), by prostaglandin J2 (PGJ2) and by L165,041 (a PPARD ligand), by vitamin D3 and, to a lesser extent, by phorbol myristate acetate (PMA) in the promyelocytic leukemia HL-60 cells. No induction by retinoic acid, nor by clofibrate (a specific PPARA agonist) (PubMed:16269462). Up-regulated by fasting (PubMed:21982743).</text>
</comment>
<comment type="similarity">
    <text evidence="11">Belongs to the arrestin family.</text>
</comment>
<comment type="sequence caution" evidence="11">
    <conflict type="erroneous initiation">
        <sequence resource="EMBL-CDS" id="BAA92614"/>
    </conflict>
    <text>Extended N-terminus.</text>
</comment>
<organism>
    <name type="scientific">Homo sapiens</name>
    <name type="common">Human</name>
    <dbReference type="NCBI Taxonomy" id="9606"/>
    <lineage>
        <taxon>Eukaryota</taxon>
        <taxon>Metazoa</taxon>
        <taxon>Chordata</taxon>
        <taxon>Craniata</taxon>
        <taxon>Vertebrata</taxon>
        <taxon>Euteleostomi</taxon>
        <taxon>Mammalia</taxon>
        <taxon>Eutheria</taxon>
        <taxon>Euarchontoglires</taxon>
        <taxon>Primates</taxon>
        <taxon>Haplorrhini</taxon>
        <taxon>Catarrhini</taxon>
        <taxon>Hominidae</taxon>
        <taxon>Homo</taxon>
    </lineage>
</organism>
<evidence type="ECO:0000256" key="1">
    <source>
        <dbReference type="SAM" id="MobiDB-lite"/>
    </source>
</evidence>
<evidence type="ECO:0000269" key="2">
    <source>
    </source>
</evidence>
<evidence type="ECO:0000269" key="3">
    <source>
    </source>
</evidence>
<evidence type="ECO:0000269" key="4">
    <source>
    </source>
</evidence>
<evidence type="ECO:0000269" key="5">
    <source>
    </source>
</evidence>
<evidence type="ECO:0000269" key="6">
    <source>
    </source>
</evidence>
<evidence type="ECO:0000269" key="7">
    <source>
    </source>
</evidence>
<evidence type="ECO:0000269" key="8">
    <source>
    </source>
</evidence>
<evidence type="ECO:0000269" key="9">
    <source>
    </source>
</evidence>
<evidence type="ECO:0000303" key="10">
    <source>
    </source>
</evidence>
<evidence type="ECO:0000305" key="11"/>
<evidence type="ECO:0007744" key="12">
    <source>
        <dbReference type="PDB" id="4N7H"/>
    </source>
</evidence>
<evidence type="ECO:0007744" key="13">
    <source>
        <dbReference type="PDB" id="4R7V"/>
    </source>
</evidence>
<evidence type="ECO:0007744" key="14">
    <source>
        <dbReference type="PDB" id="4R7X"/>
    </source>
</evidence>
<evidence type="ECO:0007829" key="15">
    <source>
        <dbReference type="PDB" id="4N7H"/>
    </source>
</evidence>
<evidence type="ECO:0007829" key="16">
    <source>
        <dbReference type="PDB" id="4R7V"/>
    </source>
</evidence>
<dbReference type="EMBL" id="AB037797">
    <property type="protein sequence ID" value="BAA92614.1"/>
    <property type="status" value="ALT_INIT"/>
    <property type="molecule type" value="mRNA"/>
</dbReference>
<dbReference type="EMBL" id="AK291753">
    <property type="protein sequence ID" value="BAF84442.1"/>
    <property type="molecule type" value="mRNA"/>
</dbReference>
<dbReference type="EMBL" id="BC015928">
    <property type="protein sequence ID" value="AAH15928.1"/>
    <property type="molecule type" value="mRNA"/>
</dbReference>
<dbReference type="EMBL" id="BC053619">
    <property type="protein sequence ID" value="AAH53619.1"/>
    <property type="molecule type" value="mRNA"/>
</dbReference>
<dbReference type="CCDS" id="CCDS34202.1"/>
<dbReference type="RefSeq" id="NP_065852.1">
    <property type="nucleotide sequence ID" value="NM_020801.4"/>
</dbReference>
<dbReference type="PDB" id="4N7H">
    <property type="method" value="X-ray"/>
    <property type="resolution" value="1.70 A"/>
    <property type="chains" value="B=342-354"/>
</dbReference>
<dbReference type="PDB" id="4R7V">
    <property type="method" value="X-ray"/>
    <property type="resolution" value="1.73 A"/>
    <property type="chains" value="A=1-165"/>
</dbReference>
<dbReference type="PDB" id="4R7X">
    <property type="method" value="X-ray"/>
    <property type="resolution" value="2.61 A"/>
    <property type="chains" value="A/B=1-180"/>
</dbReference>
<dbReference type="PDBsum" id="4N7H"/>
<dbReference type="PDBsum" id="4R7V"/>
<dbReference type="PDBsum" id="4R7X"/>
<dbReference type="SMR" id="Q96B67"/>
<dbReference type="BioGRID" id="121616">
    <property type="interactions" value="225"/>
</dbReference>
<dbReference type="CORUM" id="Q96B67"/>
<dbReference type="FunCoup" id="Q96B67">
    <property type="interactions" value="1112"/>
</dbReference>
<dbReference type="IntAct" id="Q96B67">
    <property type="interactions" value="209"/>
</dbReference>
<dbReference type="MINT" id="Q96B67"/>
<dbReference type="STRING" id="9606.ENSP00000265138"/>
<dbReference type="TCDB" id="8.A.136.1.11">
    <property type="family name" value="the alpha/beta-arrestin (arrb) family"/>
</dbReference>
<dbReference type="iPTMnet" id="Q96B67"/>
<dbReference type="PhosphoSitePlus" id="Q96B67"/>
<dbReference type="SwissPalm" id="Q96B67"/>
<dbReference type="BioMuta" id="ARRDC3"/>
<dbReference type="DMDM" id="74731205"/>
<dbReference type="jPOST" id="Q96B67"/>
<dbReference type="MassIVE" id="Q96B67"/>
<dbReference type="PaxDb" id="9606-ENSP00000265138"/>
<dbReference type="PeptideAtlas" id="Q96B67"/>
<dbReference type="ProteomicsDB" id="76051"/>
<dbReference type="Pumba" id="Q96B67"/>
<dbReference type="Antibodypedia" id="57571">
    <property type="antibodies" value="138 antibodies from 27 providers"/>
</dbReference>
<dbReference type="DNASU" id="57561"/>
<dbReference type="Ensembl" id="ENST00000265138.4">
    <property type="protein sequence ID" value="ENSP00000265138.3"/>
    <property type="gene ID" value="ENSG00000113369.9"/>
</dbReference>
<dbReference type="GeneID" id="57561"/>
<dbReference type="KEGG" id="hsa:57561"/>
<dbReference type="MANE-Select" id="ENST00000265138.4">
    <property type="protein sequence ID" value="ENSP00000265138.3"/>
    <property type="RefSeq nucleotide sequence ID" value="NM_020801.4"/>
    <property type="RefSeq protein sequence ID" value="NP_065852.1"/>
</dbReference>
<dbReference type="UCSC" id="uc003kjz.3">
    <property type="organism name" value="human"/>
</dbReference>
<dbReference type="AGR" id="HGNC:29263"/>
<dbReference type="CTD" id="57561"/>
<dbReference type="DisGeNET" id="57561"/>
<dbReference type="GeneCards" id="ARRDC3"/>
<dbReference type="HGNC" id="HGNC:29263">
    <property type="gene designation" value="ARRDC3"/>
</dbReference>
<dbReference type="HPA" id="ENSG00000113369">
    <property type="expression patterns" value="Low tissue specificity"/>
</dbReference>
<dbReference type="MIM" id="612464">
    <property type="type" value="gene"/>
</dbReference>
<dbReference type="neXtProt" id="NX_Q96B67"/>
<dbReference type="OpenTargets" id="ENSG00000113369"/>
<dbReference type="PharmGKB" id="PA134925765"/>
<dbReference type="VEuPathDB" id="HostDB:ENSG00000113369"/>
<dbReference type="eggNOG" id="KOG3780">
    <property type="taxonomic scope" value="Eukaryota"/>
</dbReference>
<dbReference type="GeneTree" id="ENSGT00940000155411"/>
<dbReference type="HOGENOM" id="CLU_039221_1_1_1"/>
<dbReference type="InParanoid" id="Q96B67"/>
<dbReference type="OMA" id="IHAGRHE"/>
<dbReference type="OrthoDB" id="2333384at2759"/>
<dbReference type="PAN-GO" id="Q96B67">
    <property type="GO annotations" value="4 GO annotations based on evolutionary models"/>
</dbReference>
<dbReference type="PhylomeDB" id="Q96B67"/>
<dbReference type="TreeFam" id="TF313650"/>
<dbReference type="PathwayCommons" id="Q96B67"/>
<dbReference type="SignaLink" id="Q96B67"/>
<dbReference type="BioGRID-ORCS" id="57561">
    <property type="hits" value="30 hits in 1164 CRISPR screens"/>
</dbReference>
<dbReference type="ChiTaRS" id="ARRDC3">
    <property type="organism name" value="human"/>
</dbReference>
<dbReference type="EvolutionaryTrace" id="Q96B67"/>
<dbReference type="GenomeRNAi" id="57561"/>
<dbReference type="Pharos" id="Q96B67">
    <property type="development level" value="Tbio"/>
</dbReference>
<dbReference type="PRO" id="PR:Q96B67"/>
<dbReference type="Proteomes" id="UP000005640">
    <property type="component" value="Chromosome 5"/>
</dbReference>
<dbReference type="RNAct" id="Q96B67">
    <property type="molecule type" value="protein"/>
</dbReference>
<dbReference type="Bgee" id="ENSG00000113369">
    <property type="expression patterns" value="Expressed in adrenal tissue and 188 other cell types or tissues"/>
</dbReference>
<dbReference type="GO" id="GO:0005737">
    <property type="term" value="C:cytoplasm"/>
    <property type="evidence" value="ECO:0000318"/>
    <property type="project" value="GO_Central"/>
</dbReference>
<dbReference type="GO" id="GO:0005769">
    <property type="term" value="C:early endosome"/>
    <property type="evidence" value="ECO:0007669"/>
    <property type="project" value="UniProtKB-SubCell"/>
</dbReference>
<dbReference type="GO" id="GO:0005768">
    <property type="term" value="C:endosome"/>
    <property type="evidence" value="ECO:0000314"/>
    <property type="project" value="MGI"/>
</dbReference>
<dbReference type="GO" id="GO:0005764">
    <property type="term" value="C:lysosome"/>
    <property type="evidence" value="ECO:0007669"/>
    <property type="project" value="UniProtKB-SubCell"/>
</dbReference>
<dbReference type="GO" id="GO:0005886">
    <property type="term" value="C:plasma membrane"/>
    <property type="evidence" value="ECO:0000314"/>
    <property type="project" value="MGI"/>
</dbReference>
<dbReference type="GO" id="GO:0031699">
    <property type="term" value="F:beta-3 adrenergic receptor binding"/>
    <property type="evidence" value="ECO:0000314"/>
    <property type="project" value="MGI"/>
</dbReference>
<dbReference type="GO" id="GO:0060613">
    <property type="term" value="P:fat pad development"/>
    <property type="evidence" value="ECO:0007669"/>
    <property type="project" value="Ensembl"/>
</dbReference>
<dbReference type="GO" id="GO:0031649">
    <property type="term" value="P:heat generation"/>
    <property type="evidence" value="ECO:0007669"/>
    <property type="project" value="Ensembl"/>
</dbReference>
<dbReference type="GO" id="GO:0071878">
    <property type="term" value="P:negative regulation of adenylate cyclase-activating adrenergic receptor signaling pathway"/>
    <property type="evidence" value="ECO:0007669"/>
    <property type="project" value="Ensembl"/>
</dbReference>
<dbReference type="GO" id="GO:0120163">
    <property type="term" value="P:negative regulation of cold-induced thermogenesis"/>
    <property type="evidence" value="ECO:0000250"/>
    <property type="project" value="YuBioLab"/>
</dbReference>
<dbReference type="GO" id="GO:0031651">
    <property type="term" value="P:negative regulation of heat generation"/>
    <property type="evidence" value="ECO:0007669"/>
    <property type="project" value="Ensembl"/>
</dbReference>
<dbReference type="GO" id="GO:0090327">
    <property type="term" value="P:negative regulation of locomotion involved in locomotory behavior"/>
    <property type="evidence" value="ECO:0007669"/>
    <property type="project" value="Ensembl"/>
</dbReference>
<dbReference type="GO" id="GO:0035332">
    <property type="term" value="P:positive regulation of hippo signaling"/>
    <property type="evidence" value="ECO:0000315"/>
    <property type="project" value="FlyBase"/>
</dbReference>
<dbReference type="GO" id="GO:0051443">
    <property type="term" value="P:positive regulation of ubiquitin-protein transferase activity"/>
    <property type="evidence" value="ECO:0000353"/>
    <property type="project" value="MGI"/>
</dbReference>
<dbReference type="GO" id="GO:0015031">
    <property type="term" value="P:protein transport"/>
    <property type="evidence" value="ECO:0000318"/>
    <property type="project" value="GO_Central"/>
</dbReference>
<dbReference type="GO" id="GO:0043588">
    <property type="term" value="P:skin development"/>
    <property type="evidence" value="ECO:0007669"/>
    <property type="project" value="Ensembl"/>
</dbReference>
<dbReference type="FunFam" id="2.60.40.640:FF:000005">
    <property type="entry name" value="Arrestin domain-containing protein 3"/>
    <property type="match status" value="1"/>
</dbReference>
<dbReference type="FunFam" id="2.60.40.640:FF:000007">
    <property type="entry name" value="Arrestin domain-containing protein 3 mRNA"/>
    <property type="match status" value="1"/>
</dbReference>
<dbReference type="Gene3D" id="2.60.40.640">
    <property type="match status" value="2"/>
</dbReference>
<dbReference type="InterPro" id="IPR014752">
    <property type="entry name" value="Arrestin-like_C"/>
</dbReference>
<dbReference type="InterPro" id="IPR011021">
    <property type="entry name" value="Arrestin-like_N"/>
</dbReference>
<dbReference type="InterPro" id="IPR011022">
    <property type="entry name" value="Arrestin_C-like"/>
</dbReference>
<dbReference type="InterPro" id="IPR050357">
    <property type="entry name" value="Arrestin_domain-protein"/>
</dbReference>
<dbReference type="InterPro" id="IPR014756">
    <property type="entry name" value="Ig_E-set"/>
</dbReference>
<dbReference type="PANTHER" id="PTHR11188">
    <property type="entry name" value="ARRESTIN DOMAIN CONTAINING PROTEIN"/>
    <property type="match status" value="1"/>
</dbReference>
<dbReference type="PANTHER" id="PTHR11188:SF49">
    <property type="entry name" value="ARRESTIN DOMAIN-CONTAINING PROTEIN 3"/>
    <property type="match status" value="1"/>
</dbReference>
<dbReference type="Pfam" id="PF02752">
    <property type="entry name" value="Arrestin_C"/>
    <property type="match status" value="1"/>
</dbReference>
<dbReference type="Pfam" id="PF00339">
    <property type="entry name" value="Arrestin_N"/>
    <property type="match status" value="1"/>
</dbReference>
<dbReference type="SMART" id="SM01017">
    <property type="entry name" value="Arrestin_C"/>
    <property type="match status" value="1"/>
</dbReference>
<dbReference type="SUPFAM" id="SSF81296">
    <property type="entry name" value="E set domains"/>
    <property type="match status" value="2"/>
</dbReference>